<gene>
    <name evidence="1" type="primary">rplT</name>
    <name type="ordered locus">bbp_122</name>
</gene>
<reference key="1">
    <citation type="journal article" date="2003" name="Proc. Natl. Acad. Sci. U.S.A.">
        <title>Reductive genome evolution in Buchnera aphidicola.</title>
        <authorList>
            <person name="van Ham R.C.H.J."/>
            <person name="Kamerbeek J."/>
            <person name="Palacios C."/>
            <person name="Rausell C."/>
            <person name="Abascal F."/>
            <person name="Bastolla U."/>
            <person name="Fernandez J.M."/>
            <person name="Jimenez L."/>
            <person name="Postigo M."/>
            <person name="Silva F.J."/>
            <person name="Tamames J."/>
            <person name="Viguera E."/>
            <person name="Latorre A."/>
            <person name="Valencia A."/>
            <person name="Moran F."/>
            <person name="Moya A."/>
        </authorList>
    </citation>
    <scope>NUCLEOTIDE SEQUENCE [LARGE SCALE GENOMIC DNA]</scope>
    <source>
        <strain>Bp</strain>
    </source>
</reference>
<name>RL20_BUCBP</name>
<proteinExistence type="inferred from homology"/>
<protein>
    <recommendedName>
        <fullName evidence="1">Large ribosomal subunit protein bL20</fullName>
    </recommendedName>
    <alternativeName>
        <fullName evidence="2">50S ribosomal protein L20</fullName>
    </alternativeName>
</protein>
<dbReference type="EMBL" id="AE016826">
    <property type="protein sequence ID" value="AAO26856.1"/>
    <property type="molecule type" value="Genomic_DNA"/>
</dbReference>
<dbReference type="RefSeq" id="WP_011091257.1">
    <property type="nucleotide sequence ID" value="NC_004545.1"/>
</dbReference>
<dbReference type="SMR" id="Q89AV8"/>
<dbReference type="STRING" id="224915.bbp_122"/>
<dbReference type="KEGG" id="bab:bbp_122"/>
<dbReference type="eggNOG" id="COG0292">
    <property type="taxonomic scope" value="Bacteria"/>
</dbReference>
<dbReference type="HOGENOM" id="CLU_123265_0_1_6"/>
<dbReference type="OrthoDB" id="9808966at2"/>
<dbReference type="Proteomes" id="UP000000601">
    <property type="component" value="Chromosome"/>
</dbReference>
<dbReference type="GO" id="GO:1990904">
    <property type="term" value="C:ribonucleoprotein complex"/>
    <property type="evidence" value="ECO:0007669"/>
    <property type="project" value="UniProtKB-KW"/>
</dbReference>
<dbReference type="GO" id="GO:0005840">
    <property type="term" value="C:ribosome"/>
    <property type="evidence" value="ECO:0007669"/>
    <property type="project" value="UniProtKB-KW"/>
</dbReference>
<dbReference type="GO" id="GO:0019843">
    <property type="term" value="F:rRNA binding"/>
    <property type="evidence" value="ECO:0007669"/>
    <property type="project" value="UniProtKB-UniRule"/>
</dbReference>
<dbReference type="GO" id="GO:0003735">
    <property type="term" value="F:structural constituent of ribosome"/>
    <property type="evidence" value="ECO:0007669"/>
    <property type="project" value="InterPro"/>
</dbReference>
<dbReference type="GO" id="GO:0000027">
    <property type="term" value="P:ribosomal large subunit assembly"/>
    <property type="evidence" value="ECO:0007669"/>
    <property type="project" value="UniProtKB-UniRule"/>
</dbReference>
<dbReference type="GO" id="GO:0006412">
    <property type="term" value="P:translation"/>
    <property type="evidence" value="ECO:0007669"/>
    <property type="project" value="InterPro"/>
</dbReference>
<dbReference type="CDD" id="cd07026">
    <property type="entry name" value="Ribosomal_L20"/>
    <property type="match status" value="1"/>
</dbReference>
<dbReference type="FunFam" id="1.10.1900.20:FF:000001">
    <property type="entry name" value="50S ribosomal protein L20"/>
    <property type="match status" value="1"/>
</dbReference>
<dbReference type="Gene3D" id="6.10.160.10">
    <property type="match status" value="1"/>
</dbReference>
<dbReference type="Gene3D" id="1.10.1900.20">
    <property type="entry name" value="Ribosomal protein L20"/>
    <property type="match status" value="1"/>
</dbReference>
<dbReference type="HAMAP" id="MF_00382">
    <property type="entry name" value="Ribosomal_bL20"/>
    <property type="match status" value="1"/>
</dbReference>
<dbReference type="InterPro" id="IPR005813">
    <property type="entry name" value="Ribosomal_bL20"/>
</dbReference>
<dbReference type="InterPro" id="IPR049946">
    <property type="entry name" value="RIBOSOMAL_L20_CS"/>
</dbReference>
<dbReference type="InterPro" id="IPR035566">
    <property type="entry name" value="Ribosomal_protein_bL20_C"/>
</dbReference>
<dbReference type="NCBIfam" id="TIGR01032">
    <property type="entry name" value="rplT_bact"/>
    <property type="match status" value="1"/>
</dbReference>
<dbReference type="PANTHER" id="PTHR10986">
    <property type="entry name" value="39S RIBOSOMAL PROTEIN L20"/>
    <property type="match status" value="1"/>
</dbReference>
<dbReference type="Pfam" id="PF00453">
    <property type="entry name" value="Ribosomal_L20"/>
    <property type="match status" value="1"/>
</dbReference>
<dbReference type="PRINTS" id="PR00062">
    <property type="entry name" value="RIBOSOMALL20"/>
</dbReference>
<dbReference type="SUPFAM" id="SSF74731">
    <property type="entry name" value="Ribosomal protein L20"/>
    <property type="match status" value="1"/>
</dbReference>
<dbReference type="PROSITE" id="PS00937">
    <property type="entry name" value="RIBOSOMAL_L20"/>
    <property type="match status" value="1"/>
</dbReference>
<organism>
    <name type="scientific">Buchnera aphidicola subsp. Baizongia pistaciae (strain Bp)</name>
    <dbReference type="NCBI Taxonomy" id="224915"/>
    <lineage>
        <taxon>Bacteria</taxon>
        <taxon>Pseudomonadati</taxon>
        <taxon>Pseudomonadota</taxon>
        <taxon>Gammaproteobacteria</taxon>
        <taxon>Enterobacterales</taxon>
        <taxon>Erwiniaceae</taxon>
        <taxon>Buchnera</taxon>
    </lineage>
</organism>
<keyword id="KW-1185">Reference proteome</keyword>
<keyword id="KW-0687">Ribonucleoprotein</keyword>
<keyword id="KW-0689">Ribosomal protein</keyword>
<keyword id="KW-0694">RNA-binding</keyword>
<keyword id="KW-0699">rRNA-binding</keyword>
<evidence type="ECO:0000255" key="1">
    <source>
        <dbReference type="HAMAP-Rule" id="MF_00382"/>
    </source>
</evidence>
<evidence type="ECO:0000305" key="2"/>
<sequence>MAHVKRGVIARARHKKVLKQAKGYYGARSRTYRTARQAIIKAGQYSYRDRRQRKRYFRKLWITRINAAVRENQISYSKFMYGLKKASIAVDRKMLSELAIFDNVSFCSLIKSSKDALTSIELNKNL</sequence>
<feature type="chain" id="PRO_0000177134" description="Large ribosomal subunit protein bL20">
    <location>
        <begin position="1"/>
        <end position="126"/>
    </location>
</feature>
<accession>Q89AV8</accession>
<comment type="function">
    <text evidence="1">Binds directly to 23S ribosomal RNA and is necessary for the in vitro assembly process of the 50S ribosomal subunit. It is not involved in the protein synthesizing functions of that subunit.</text>
</comment>
<comment type="similarity">
    <text evidence="1">Belongs to the bacterial ribosomal protein bL20 family.</text>
</comment>